<feature type="chain" id="PRO_0000370273" description="Casparian strip membrane protein 1">
    <location>
        <begin position="1"/>
        <end position="187"/>
    </location>
</feature>
<feature type="topological domain" description="Cytoplasmic" evidence="2">
    <location>
        <begin position="1"/>
        <end position="27"/>
    </location>
</feature>
<feature type="transmembrane region" description="Helical" evidence="2">
    <location>
        <begin position="28"/>
        <end position="48"/>
    </location>
</feature>
<feature type="topological domain" description="Extracellular" evidence="2">
    <location>
        <begin position="49"/>
        <end position="75"/>
    </location>
</feature>
<feature type="transmembrane region" description="Helical" evidence="2">
    <location>
        <begin position="76"/>
        <end position="96"/>
    </location>
</feature>
<feature type="topological domain" description="Cytoplasmic" evidence="2">
    <location>
        <begin position="97"/>
        <end position="115"/>
    </location>
</feature>
<feature type="transmembrane region" description="Helical" evidence="2">
    <location>
        <begin position="116"/>
        <end position="136"/>
    </location>
</feature>
<feature type="topological domain" description="Extracellular" evidence="2">
    <location>
        <begin position="137"/>
        <end position="162"/>
    </location>
</feature>
<feature type="transmembrane region" description="Helical" evidence="2">
    <location>
        <begin position="163"/>
        <end position="183"/>
    </location>
</feature>
<feature type="topological domain" description="Cytoplasmic" evidence="2">
    <location>
        <begin position="184"/>
        <end position="187"/>
    </location>
</feature>
<feature type="region of interest" description="Disordered" evidence="3">
    <location>
        <begin position="1"/>
        <end position="20"/>
    </location>
</feature>
<feature type="compositionally biased region" description="Basic and acidic residues" evidence="3">
    <location>
        <begin position="1"/>
        <end position="10"/>
    </location>
</feature>
<feature type="glycosylation site" description="N-linked (GlcNAc...) asparagine" evidence="2">
    <location>
        <position position="52"/>
    </location>
</feature>
<protein>
    <recommendedName>
        <fullName>Casparian strip membrane protein 1</fullName>
        <shortName>ZmCASP1</shortName>
    </recommendedName>
</protein>
<dbReference type="EMBL" id="EU961524">
    <property type="protein sequence ID" value="ACG33642.1"/>
    <property type="molecule type" value="mRNA"/>
</dbReference>
<dbReference type="RefSeq" id="NP_001148957.1">
    <property type="nucleotide sequence ID" value="NM_001155485.1"/>
</dbReference>
<dbReference type="SMR" id="B6T959"/>
<dbReference type="FunCoup" id="B6T959">
    <property type="interactions" value="3113"/>
</dbReference>
<dbReference type="PaxDb" id="4577-GRMZM2G110832_P01"/>
<dbReference type="eggNOG" id="ENOG502RXTK">
    <property type="taxonomic scope" value="Eukaryota"/>
</dbReference>
<dbReference type="InParanoid" id="B6T959"/>
<dbReference type="Proteomes" id="UP000007305">
    <property type="component" value="Unplaced"/>
</dbReference>
<dbReference type="ExpressionAtlas" id="B6T959">
    <property type="expression patterns" value="baseline"/>
</dbReference>
<dbReference type="GO" id="GO:0005886">
    <property type="term" value="C:plasma membrane"/>
    <property type="evidence" value="ECO:0007669"/>
    <property type="project" value="UniProtKB-SubCell"/>
</dbReference>
<dbReference type="GO" id="GO:0071555">
    <property type="term" value="P:cell wall organization"/>
    <property type="evidence" value="ECO:0007669"/>
    <property type="project" value="UniProtKB-KW"/>
</dbReference>
<dbReference type="InterPro" id="IPR006459">
    <property type="entry name" value="CASP/CASPL"/>
</dbReference>
<dbReference type="InterPro" id="IPR006702">
    <property type="entry name" value="CASP_dom"/>
</dbReference>
<dbReference type="InterPro" id="IPR044173">
    <property type="entry name" value="CASPL"/>
</dbReference>
<dbReference type="NCBIfam" id="TIGR01569">
    <property type="entry name" value="A_tha_TIGR01569"/>
    <property type="match status" value="1"/>
</dbReference>
<dbReference type="PANTHER" id="PTHR36488:SF12">
    <property type="entry name" value="CASP-LIKE PROTEIN"/>
    <property type="match status" value="1"/>
</dbReference>
<dbReference type="PANTHER" id="PTHR36488">
    <property type="entry name" value="CASP-LIKE PROTEIN 1U1"/>
    <property type="match status" value="1"/>
</dbReference>
<dbReference type="Pfam" id="PF04535">
    <property type="entry name" value="CASP_dom"/>
    <property type="match status" value="1"/>
</dbReference>
<evidence type="ECO:0000250" key="1"/>
<evidence type="ECO:0000255" key="2"/>
<evidence type="ECO:0000256" key="3">
    <source>
        <dbReference type="SAM" id="MobiDB-lite"/>
    </source>
</evidence>
<evidence type="ECO:0000305" key="4"/>
<comment type="function">
    <text evidence="1">Regulates membrane-cell wall junctions and localized cell wall deposition. Required for establishment of the Casparian strip membrane domain (CSD) and the subsequent formation of Casparian strips, a cell wall modification of the root endodermis that determines an apoplastic barrier between the intraorganismal apoplasm and the extraorganismal apoplasm and prevents lateral diffusion (By similarity).</text>
</comment>
<comment type="subunit">
    <text evidence="1">Homodimer and heterodimers.</text>
</comment>
<comment type="subcellular location">
    <subcellularLocation>
        <location evidence="1">Cell membrane</location>
        <topology evidence="1">Multi-pass membrane protein</topology>
    </subcellularLocation>
    <text evidence="1">Very restricted localization following a belt shape within the plasma membrane which coincides with the position of the Casparian strip membrane domain in the root endodermis.</text>
</comment>
<comment type="similarity">
    <text evidence="4">Belongs to the Casparian strip membrane proteins (CASP) family.</text>
</comment>
<reference key="1">
    <citation type="journal article" date="2009" name="Plant Mol. Biol.">
        <title>Insights into corn genes derived from large-scale cDNA sequencing.</title>
        <authorList>
            <person name="Alexandrov N.N."/>
            <person name="Brover V.V."/>
            <person name="Freidin S."/>
            <person name="Troukhan M.E."/>
            <person name="Tatarinova T.V."/>
            <person name="Zhang H."/>
            <person name="Swaller T.J."/>
            <person name="Lu Y.-P."/>
            <person name="Bouck J."/>
            <person name="Flavell R.B."/>
            <person name="Feldmann K.A."/>
        </authorList>
    </citation>
    <scope>NUCLEOTIDE SEQUENCE [LARGE SCALE MRNA]</scope>
</reference>
<reference key="2">
    <citation type="journal article" date="2014" name="Plant Physiol.">
        <title>Functional and evolutionary analysis of the CASPARIAN STRIP MEMBRANE DOMAIN PROTEIN family.</title>
        <authorList>
            <person name="Roppolo D."/>
            <person name="Boeckmann B."/>
            <person name="Pfister A."/>
            <person name="Boutet E."/>
            <person name="Rubio M.C."/>
            <person name="Denervaud-Tendon V."/>
            <person name="Vermeer J.E."/>
            <person name="Gheyselinck J."/>
            <person name="Xenarios I."/>
            <person name="Geldner N."/>
        </authorList>
    </citation>
    <scope>GENE FAMILY</scope>
    <scope>NOMENCLATURE</scope>
</reference>
<sequence length="187" mass="20009">MKGSSEHGETSKQAPLGSSRGVSKGVSVLDLILRFIAIIGTLASAIAMGTTNETLPFFTQFIRFKAQYSDLPTLTFFVVANSIVCAYLTLSLPLSIVHIIRSRAKYSRLLLVVLDAAMLALVTPGASAAAAIVYLAHKGNVRANWLAICQQFDSFCERISGCLIGSFGAMVMLVLLLLLSAIALARR</sequence>
<proteinExistence type="evidence at transcript level"/>
<keyword id="KW-1003">Cell membrane</keyword>
<keyword id="KW-0961">Cell wall biogenesis/degradation</keyword>
<keyword id="KW-0325">Glycoprotein</keyword>
<keyword id="KW-0472">Membrane</keyword>
<keyword id="KW-1185">Reference proteome</keyword>
<keyword id="KW-0812">Transmembrane</keyword>
<keyword id="KW-1133">Transmembrane helix</keyword>
<accession>B6T959</accession>
<organism>
    <name type="scientific">Zea mays</name>
    <name type="common">Maize</name>
    <dbReference type="NCBI Taxonomy" id="4577"/>
    <lineage>
        <taxon>Eukaryota</taxon>
        <taxon>Viridiplantae</taxon>
        <taxon>Streptophyta</taxon>
        <taxon>Embryophyta</taxon>
        <taxon>Tracheophyta</taxon>
        <taxon>Spermatophyta</taxon>
        <taxon>Magnoliopsida</taxon>
        <taxon>Liliopsida</taxon>
        <taxon>Poales</taxon>
        <taxon>Poaceae</taxon>
        <taxon>PACMAD clade</taxon>
        <taxon>Panicoideae</taxon>
        <taxon>Andropogonodae</taxon>
        <taxon>Andropogoneae</taxon>
        <taxon>Tripsacinae</taxon>
        <taxon>Zea</taxon>
    </lineage>
</organism>
<name>CASP1_MAIZE</name>